<dbReference type="EC" id="5.3.1.24" evidence="1"/>
<dbReference type="EMBL" id="CP000094">
    <property type="protein sequence ID" value="ABA73640.1"/>
    <property type="molecule type" value="Genomic_DNA"/>
</dbReference>
<dbReference type="RefSeq" id="WP_011333358.1">
    <property type="nucleotide sequence ID" value="NC_007492.2"/>
</dbReference>
<dbReference type="SMR" id="Q3KF16"/>
<dbReference type="KEGG" id="pfo:Pfl01_1897"/>
<dbReference type="eggNOG" id="COG0135">
    <property type="taxonomic scope" value="Bacteria"/>
</dbReference>
<dbReference type="HOGENOM" id="CLU_076364_2_0_6"/>
<dbReference type="UniPathway" id="UPA00035">
    <property type="reaction ID" value="UER00042"/>
</dbReference>
<dbReference type="Proteomes" id="UP000002704">
    <property type="component" value="Chromosome"/>
</dbReference>
<dbReference type="GO" id="GO:0004640">
    <property type="term" value="F:phosphoribosylanthranilate isomerase activity"/>
    <property type="evidence" value="ECO:0007669"/>
    <property type="project" value="UniProtKB-UniRule"/>
</dbReference>
<dbReference type="GO" id="GO:0000162">
    <property type="term" value="P:L-tryptophan biosynthetic process"/>
    <property type="evidence" value="ECO:0007669"/>
    <property type="project" value="UniProtKB-UniRule"/>
</dbReference>
<dbReference type="CDD" id="cd00405">
    <property type="entry name" value="PRAI"/>
    <property type="match status" value="1"/>
</dbReference>
<dbReference type="FunFam" id="3.20.20.70:FF:000075">
    <property type="entry name" value="Tryptophan biosynthesis protein TRP1"/>
    <property type="match status" value="1"/>
</dbReference>
<dbReference type="Gene3D" id="3.20.20.70">
    <property type="entry name" value="Aldolase class I"/>
    <property type="match status" value="1"/>
</dbReference>
<dbReference type="HAMAP" id="MF_00135">
    <property type="entry name" value="PRAI"/>
    <property type="match status" value="1"/>
</dbReference>
<dbReference type="InterPro" id="IPR013785">
    <property type="entry name" value="Aldolase_TIM"/>
</dbReference>
<dbReference type="InterPro" id="IPR001240">
    <property type="entry name" value="PRAI_dom"/>
</dbReference>
<dbReference type="InterPro" id="IPR011060">
    <property type="entry name" value="RibuloseP-bd_barrel"/>
</dbReference>
<dbReference type="InterPro" id="IPR044643">
    <property type="entry name" value="TrpF_fam"/>
</dbReference>
<dbReference type="NCBIfam" id="NF002298">
    <property type="entry name" value="PRK01222.1-4"/>
    <property type="match status" value="1"/>
</dbReference>
<dbReference type="NCBIfam" id="NF002299">
    <property type="entry name" value="PRK01222.1-6"/>
    <property type="match status" value="1"/>
</dbReference>
<dbReference type="PANTHER" id="PTHR42894">
    <property type="entry name" value="N-(5'-PHOSPHORIBOSYL)ANTHRANILATE ISOMERASE"/>
    <property type="match status" value="1"/>
</dbReference>
<dbReference type="PANTHER" id="PTHR42894:SF1">
    <property type="entry name" value="N-(5'-PHOSPHORIBOSYL)ANTHRANILATE ISOMERASE"/>
    <property type="match status" value="1"/>
</dbReference>
<dbReference type="Pfam" id="PF00697">
    <property type="entry name" value="PRAI"/>
    <property type="match status" value="1"/>
</dbReference>
<dbReference type="SUPFAM" id="SSF51366">
    <property type="entry name" value="Ribulose-phoshate binding barrel"/>
    <property type="match status" value="1"/>
</dbReference>
<protein>
    <recommendedName>
        <fullName evidence="1">N-(5'-phosphoribosyl)anthranilate isomerase</fullName>
        <shortName evidence="1">PRAI</shortName>
        <ecNumber evidence="1">5.3.1.24</ecNumber>
    </recommendedName>
</protein>
<keyword id="KW-0028">Amino-acid biosynthesis</keyword>
<keyword id="KW-0057">Aromatic amino acid biosynthesis</keyword>
<keyword id="KW-0413">Isomerase</keyword>
<keyword id="KW-0822">Tryptophan biosynthesis</keyword>
<sequence length="204" mass="21361">MSAVRSKICGITRIEDALAAVEAGADAIGFVFYAKSPRAVTVQQARSIIAALPPFVTTVGLFVNASRCELGEILDAVPLDLLQFHGDETAAECEGWHRPYIKALRVKAGDNIAAACDAYPSASGVLLDTYVEGVPGGTGEAFDWSLIPQGLSKPLILAGGLTPENVADAIARVRPYAVDVSGGVEASKGIKDHAKIRAFINAVR</sequence>
<name>TRPF_PSEPF</name>
<gene>
    <name evidence="1" type="primary">trpF</name>
    <name type="ordered locus">Pfl01_1897</name>
</gene>
<reference key="1">
    <citation type="journal article" date="2009" name="Genome Biol.">
        <title>Genomic and genetic analyses of diversity and plant interactions of Pseudomonas fluorescens.</title>
        <authorList>
            <person name="Silby M.W."/>
            <person name="Cerdeno-Tarraga A.M."/>
            <person name="Vernikos G.S."/>
            <person name="Giddens S.R."/>
            <person name="Jackson R.W."/>
            <person name="Preston G.M."/>
            <person name="Zhang X.-X."/>
            <person name="Moon C.D."/>
            <person name="Gehrig S.M."/>
            <person name="Godfrey S.A.C."/>
            <person name="Knight C.G."/>
            <person name="Malone J.G."/>
            <person name="Robinson Z."/>
            <person name="Spiers A.J."/>
            <person name="Harris S."/>
            <person name="Challis G.L."/>
            <person name="Yaxley A.M."/>
            <person name="Harris D."/>
            <person name="Seeger K."/>
            <person name="Murphy L."/>
            <person name="Rutter S."/>
            <person name="Squares R."/>
            <person name="Quail M.A."/>
            <person name="Saunders E."/>
            <person name="Mavromatis K."/>
            <person name="Brettin T.S."/>
            <person name="Bentley S.D."/>
            <person name="Hothersall J."/>
            <person name="Stephens E."/>
            <person name="Thomas C.M."/>
            <person name="Parkhill J."/>
            <person name="Levy S.B."/>
            <person name="Rainey P.B."/>
            <person name="Thomson N.R."/>
        </authorList>
    </citation>
    <scope>NUCLEOTIDE SEQUENCE [LARGE SCALE GENOMIC DNA]</scope>
    <source>
        <strain>Pf0-1</strain>
    </source>
</reference>
<comment type="catalytic activity">
    <reaction evidence="1">
        <text>N-(5-phospho-beta-D-ribosyl)anthranilate = 1-(2-carboxyphenylamino)-1-deoxy-D-ribulose 5-phosphate</text>
        <dbReference type="Rhea" id="RHEA:21540"/>
        <dbReference type="ChEBI" id="CHEBI:18277"/>
        <dbReference type="ChEBI" id="CHEBI:58613"/>
        <dbReference type="EC" id="5.3.1.24"/>
    </reaction>
</comment>
<comment type="pathway">
    <text evidence="1">Amino-acid biosynthesis; L-tryptophan biosynthesis; L-tryptophan from chorismate: step 3/5.</text>
</comment>
<comment type="similarity">
    <text evidence="1">Belongs to the TrpF family.</text>
</comment>
<accession>Q3KF16</accession>
<proteinExistence type="inferred from homology"/>
<feature type="chain" id="PRO_1000018625" description="N-(5'-phosphoribosyl)anthranilate isomerase">
    <location>
        <begin position="1"/>
        <end position="204"/>
    </location>
</feature>
<organism>
    <name type="scientific">Pseudomonas fluorescens (strain Pf0-1)</name>
    <dbReference type="NCBI Taxonomy" id="205922"/>
    <lineage>
        <taxon>Bacteria</taxon>
        <taxon>Pseudomonadati</taxon>
        <taxon>Pseudomonadota</taxon>
        <taxon>Gammaproteobacteria</taxon>
        <taxon>Pseudomonadales</taxon>
        <taxon>Pseudomonadaceae</taxon>
        <taxon>Pseudomonas</taxon>
    </lineage>
</organism>
<evidence type="ECO:0000255" key="1">
    <source>
        <dbReference type="HAMAP-Rule" id="MF_00135"/>
    </source>
</evidence>